<keyword id="KW-1035">Host cytoplasm</keyword>
<keyword id="KW-1048">Host nucleus</keyword>
<keyword id="KW-0964">Secreted</keyword>
<keyword id="KW-0732">Signal</keyword>
<keyword id="KW-0843">Virulence</keyword>
<protein>
    <recommendedName>
        <fullName evidence="4">Secreted RxLR effector protein 27</fullName>
    </recommendedName>
</protein>
<sequence>MTNLFTRHTRRSLTALALLSGGVYAADEVNAKILSRSLRVFVTGGQVLWDYRIHFKGIERDHPDYHSKLQSLNQRIAHRLLYLCFENGGIYTKFGQQLATFNHGLPREYTMTLAQLQDQAKPVSFDKVKQTIEAEMGRPWNECYKEFDQTPIASASLAQVHHAVDALGREMAVKVQYPHLELQMKADIRVIKWAFQFTEYCFPDVQLQWLFPEFQKALLAEVHFDAQCTALLIIF</sequence>
<organism>
    <name type="scientific">Plasmopara viticola</name>
    <name type="common">Downy mildew of grapevine</name>
    <name type="synonym">Botrytis viticola</name>
    <dbReference type="NCBI Taxonomy" id="143451"/>
    <lineage>
        <taxon>Eukaryota</taxon>
        <taxon>Sar</taxon>
        <taxon>Stramenopiles</taxon>
        <taxon>Oomycota</taxon>
        <taxon>Peronosporales</taxon>
        <taxon>Peronosporaceae</taxon>
        <taxon>Plasmopara</taxon>
    </lineage>
</organism>
<evidence type="ECO:0000255" key="1"/>
<evidence type="ECO:0000269" key="2">
    <source>
    </source>
</evidence>
<evidence type="ECO:0000269" key="3">
    <source ref="2"/>
</evidence>
<evidence type="ECO:0000303" key="4">
    <source ref="2"/>
</evidence>
<evidence type="ECO:0000305" key="5"/>
<evidence type="ECO:0000305" key="6">
    <source ref="2"/>
</evidence>
<gene>
    <name evidence="4" type="primary">RxLR27</name>
</gene>
<dbReference type="EMBL" id="KX010957">
    <property type="protein sequence ID" value="ANC73377.1"/>
    <property type="molecule type" value="mRNA"/>
</dbReference>
<dbReference type="SMR" id="A0A172M468"/>
<dbReference type="GO" id="GO:0005576">
    <property type="term" value="C:extracellular region"/>
    <property type="evidence" value="ECO:0007669"/>
    <property type="project" value="UniProtKB-SubCell"/>
</dbReference>
<dbReference type="GO" id="GO:0030430">
    <property type="term" value="C:host cell cytoplasm"/>
    <property type="evidence" value="ECO:0007669"/>
    <property type="project" value="UniProtKB-SubCell"/>
</dbReference>
<dbReference type="GO" id="GO:0042025">
    <property type="term" value="C:host cell nucleus"/>
    <property type="evidence" value="ECO:0007669"/>
    <property type="project" value="UniProtKB-SubCell"/>
</dbReference>
<dbReference type="InterPro" id="IPR004147">
    <property type="entry name" value="ABC1_dom"/>
</dbReference>
<dbReference type="InterPro" id="IPR011009">
    <property type="entry name" value="Kinase-like_dom_sf"/>
</dbReference>
<dbReference type="InterPro" id="IPR051130">
    <property type="entry name" value="Mito_struct-func_regulator"/>
</dbReference>
<dbReference type="PANTHER" id="PTHR43173:SF28">
    <property type="entry name" value="AARF DOMAIN CONTAINING KINASE 5"/>
    <property type="match status" value="1"/>
</dbReference>
<dbReference type="PANTHER" id="PTHR43173">
    <property type="entry name" value="ABC1 FAMILY PROTEIN"/>
    <property type="match status" value="1"/>
</dbReference>
<dbReference type="Pfam" id="PF03109">
    <property type="entry name" value="ABC1"/>
    <property type="match status" value="1"/>
</dbReference>
<dbReference type="SUPFAM" id="SSF56112">
    <property type="entry name" value="Protein kinase-like (PK-like)"/>
    <property type="match status" value="1"/>
</dbReference>
<accession>A0A172M468</accession>
<feature type="signal peptide" evidence="1">
    <location>
        <begin position="1"/>
        <end position="25"/>
    </location>
</feature>
<feature type="chain" id="PRO_5007999405" description="Secreted RxLR effector protein 27">
    <location>
        <begin position="26"/>
        <end position="235"/>
    </location>
</feature>
<feature type="short sequence motif" description="RxLR-dEER" evidence="6">
    <location>
        <begin position="36"/>
        <end position="60"/>
    </location>
</feature>
<reference key="1">
    <citation type="journal article" date="2016" name="Front. Microbiol.">
        <title>Studying the mechanism of Plasmopara viticola RxLR effectors on suppressing plant immunity.</title>
        <authorList>
            <person name="Xiang J."/>
            <person name="Li X."/>
            <person name="Wu J."/>
            <person name="Yin L."/>
            <person name="Zhang Y."/>
            <person name="Lu J."/>
        </authorList>
    </citation>
    <scope>NUCLEOTIDE SEQUENCE [MRNA]</scope>
    <scope>INDUCTION</scope>
    <scope>FUNCTION</scope>
    <scope>SUBCELLULAR LOCATION</scope>
    <source>
        <strain>ZJ-1-1</strain>
    </source>
</reference>
<reference key="2">
    <citation type="journal article" date="2015" name="Physiol. Mol. Plant Pathol.">
        <title>Characterization of the secretome of Plasmopara viticola by de novo transcriptome analysis.</title>
        <authorList>
            <person name="Yin L."/>
            <person name="Li X."/>
            <person name="Xiang J."/>
            <person name="Qu J."/>
            <person name="Zhang Y."/>
            <person name="Dry I.B."/>
            <person name="Lu J."/>
        </authorList>
    </citation>
    <scope>IDENTIFICATION</scope>
    <scope>INDUCTION</scope>
    <scope>DOMAIN</scope>
</reference>
<name>RLR27_PLAVT</name>
<comment type="function">
    <text evidence="2">Effector that acts as a broad suppressor of cell death to interrupt plant immunity. Inhibits cell death induced by cell death-inducing proteins, including the PAMP elicitor INF1 from P.infestans.</text>
</comment>
<comment type="subcellular location">
    <subcellularLocation>
        <location evidence="2">Secreted</location>
    </subcellularLocation>
    <subcellularLocation>
        <location evidence="2">Host cytoplasm</location>
    </subcellularLocation>
    <subcellularLocation>
        <location evidence="2">Host nucleus</location>
    </subcellularLocation>
</comment>
<comment type="induction">
    <text evidence="2 3">Expression is up-regulated at the earlier infection stages.</text>
</comment>
<comment type="domain">
    <text evidence="6">The RxLR-dEER motif acts to carry the protein into the host cell cytoplasm through binding to cell surface phosphatidylinositol-3-phosphate.</text>
</comment>
<comment type="similarity">
    <text evidence="5">Belongs to the RxLR effector family.</text>
</comment>
<proteinExistence type="evidence at transcript level"/>